<feature type="signal peptide" evidence="15">
    <location>
        <begin position="1"/>
        <end position="32"/>
    </location>
</feature>
<feature type="chain" id="PRO_0000013538" description="Hypoxia up-regulated protein 1">
    <location>
        <begin position="33"/>
        <end position="999"/>
    </location>
</feature>
<feature type="region of interest" description="Disordered" evidence="3">
    <location>
        <begin position="578"/>
        <end position="694"/>
    </location>
</feature>
<feature type="region of interest" description="Disordered" evidence="3">
    <location>
        <begin position="909"/>
        <end position="999"/>
    </location>
</feature>
<feature type="short sequence motif" description="Prevents secretion from ER" evidence="2">
    <location>
        <begin position="996"/>
        <end position="999"/>
    </location>
</feature>
<feature type="compositionally biased region" description="Basic and acidic residues" evidence="3">
    <location>
        <begin position="611"/>
        <end position="626"/>
    </location>
</feature>
<feature type="compositionally biased region" description="Basic and acidic residues" evidence="3">
    <location>
        <begin position="641"/>
        <end position="672"/>
    </location>
</feature>
<feature type="modified residue" description="Phosphoserine" evidence="14">
    <location>
        <position position="567"/>
    </location>
</feature>
<feature type="modified residue" description="N6-acetyllysine" evidence="1">
    <location>
        <position position="883"/>
    </location>
</feature>
<feature type="glycosylation site" description="N-linked (GlcNAc...) asparagine" evidence="5">
    <location>
        <position position="155"/>
    </location>
</feature>
<feature type="glycosylation site" description="N-linked (GlcNAc...) asparagine" evidence="2">
    <location>
        <position position="222"/>
    </location>
</feature>
<feature type="glycosylation site" description="N-linked (GlcNAc...) asparagine" evidence="5 6 7 8 9">
    <location>
        <position position="515"/>
    </location>
</feature>
<feature type="glycosylation site" description="N-linked (GlcNAc...) asparagine" evidence="5 8">
    <location>
        <position position="596"/>
    </location>
</feature>
<feature type="glycosylation site" description="N-linked (GlcNAc...) asparagine" evidence="5 7 8">
    <location>
        <position position="830"/>
    </location>
</feature>
<feature type="glycosylation site" description="N-linked (GlcNAc...) asparagine" evidence="5 8">
    <location>
        <position position="862"/>
    </location>
</feature>
<feature type="glycosylation site" description="N-linked (GlcNAc...) asparagine" evidence="7">
    <location>
        <position position="869"/>
    </location>
</feature>
<feature type="glycosylation site" description="N-linked (GlcNAc...) asparagine" evidence="2">
    <location>
        <position position="922"/>
    </location>
</feature>
<feature type="glycosylation site" description="N-linked (GlcNAc...) asparagine" evidence="5 7 8">
    <location>
        <position position="931"/>
    </location>
</feature>
<feature type="splice variant" id="VSP_056364" description="In isoform 2." evidence="11">
    <location>
        <begin position="1"/>
        <end position="87"/>
    </location>
</feature>
<feature type="splice variant" id="VSP_056365" description="In isoform 2." evidence="11">
    <original>EEEESPAEGSKDEPGEQVELKEEAEAPVEDGSQPPPPEPKGDAT</original>
    <variation>MLFLCPARLPQSKQAIDRFHTAVTCMEPPWGRRCRARPAWRLCS</variation>
    <location>
        <begin position="603"/>
        <end position="646"/>
    </location>
</feature>
<feature type="splice variant" id="VSP_056366" description="In isoform 2." evidence="11">
    <location>
        <begin position="647"/>
        <end position="999"/>
    </location>
</feature>
<feature type="sequence variant" id="VAR_081773" description="In IMD59; uncertain significance." evidence="10">
    <original>Y</original>
    <variation>H</variation>
    <location>
        <position position="231"/>
    </location>
</feature>
<feature type="sequence variant" id="VAR_081774" description="In IMD59; uncertain significance." evidence="10">
    <original>A</original>
    <variation>P</variation>
    <location>
        <position position="419"/>
    </location>
</feature>
<feature type="sequence conflict" description="In Ref. 5; BAD96476." evidence="13" ref="5">
    <original>K</original>
    <variation>E</variation>
    <location>
        <position position="75"/>
    </location>
</feature>
<feature type="sequence conflict" description="In Ref. 5; BAD96476." evidence="13" ref="5">
    <original>N</original>
    <variation>D</variation>
    <location>
        <position position="92"/>
    </location>
</feature>
<feature type="sequence conflict" description="In Ref. 5; BAD96476." evidence="13" ref="5">
    <original>M</original>
    <variation>T</variation>
    <location>
        <position position="255"/>
    </location>
</feature>
<feature type="sequence conflict" description="In Ref. 5; BAD96476." evidence="13" ref="5">
    <original>V</original>
    <variation>A</variation>
    <location>
        <position position="442"/>
    </location>
</feature>
<comment type="function">
    <text evidence="1 4">Has a pivotal role in cytoprotective cellular mechanisms triggered by oxygen deprivation. Promotes HSPA5/BiP-mediated ATP nucleotide exchange and thereby activates the unfolded protein response (UPR) pathway in the presence of endoplasmic reticulum stress (By similarity). May play a role as a molecular chaperone and participate in protein folding.</text>
</comment>
<comment type="subunit">
    <text>Part of a large chaperone multiprotein complex comprising DNAJB11, HSP90B1, HSPA5, HYOU, PDIA2, PDIA4, PDIA6, PPIB, SDF2L1, UGGT1 and very small amounts of ERP29, but not, or at very low levels, CALR nor CANX.</text>
</comment>
<comment type="interaction">
    <interactant intactId="EBI-1054186">
        <id>Q9Y4L1</id>
    </interactant>
    <interactant intactId="EBI-354921">
        <id>P11021</id>
        <label>HSPA5</label>
    </interactant>
    <organismsDiffer>false</organismsDiffer>
    <experiments>3</experiments>
</comment>
<comment type="subcellular location">
    <subcellularLocation>
        <location>Endoplasmic reticulum lumen</location>
    </subcellularLocation>
</comment>
<comment type="alternative products">
    <event type="alternative splicing"/>
    <isoform>
        <id>Q9Y4L1-1</id>
        <name>1</name>
        <sequence type="displayed"/>
    </isoform>
    <isoform>
        <id>Q9Y4L1-2</id>
        <name>2</name>
        <sequence type="described" ref="VSP_056364 VSP_056365 VSP_056366"/>
    </isoform>
</comment>
<comment type="tissue specificity">
    <text>Highly expressed in tissues that contain well-developed endoplasmic reticulum and synthesize large amounts of secretory proteins. Highly expressed in liver and pancreas and lower expression in brain and kidney. Also expressed in macrophages within aortic atherosclerotic plaques, and in breast cancers.</text>
</comment>
<comment type="induction">
    <text>By hypoxia and also by 2-deoxyglucose or tunicamycin.</text>
</comment>
<comment type="disease" evidence="10">
    <disease id="DI-05441">
        <name>Immunodeficiency 59 and hypoglycemia</name>
        <acronym>IMD59</acronym>
        <description>An autosomal recessive primary immunologic disorder characterized by combined immunodeficiency, granulocytopenia, B-cell and dendritic cell deficiency, recurrent septic infections of the respiratory tract, skin and mucous membranes, and disturbed glucose metabolism.</description>
        <dbReference type="MIM" id="233600"/>
    </disease>
    <text>The disease may be caused by variants affecting the gene represented in this entry.</text>
</comment>
<comment type="similarity">
    <text evidence="13">Belongs to the heat shock protein 70 family.</text>
</comment>
<dbReference type="EMBL" id="U65785">
    <property type="protein sequence ID" value="AAC50947.1"/>
    <property type="molecule type" value="mRNA"/>
</dbReference>
<dbReference type="EMBL" id="AB009979">
    <property type="protein sequence ID" value="BAF80348.1"/>
    <property type="molecule type" value="Genomic_DNA"/>
</dbReference>
<dbReference type="EMBL" id="DQ350134">
    <property type="protein sequence ID" value="ABC75106.1"/>
    <property type="molecule type" value="mRNA"/>
</dbReference>
<dbReference type="EMBL" id="DQ372932">
    <property type="protein sequence ID" value="ABD14370.1"/>
    <property type="molecule type" value="mRNA"/>
</dbReference>
<dbReference type="EMBL" id="AK304264">
    <property type="protein sequence ID" value="BAH14145.1"/>
    <property type="molecule type" value="mRNA"/>
</dbReference>
<dbReference type="EMBL" id="AK314178">
    <property type="protein sequence ID" value="BAG36860.1"/>
    <property type="molecule type" value="mRNA"/>
</dbReference>
<dbReference type="EMBL" id="AK222756">
    <property type="protein sequence ID" value="BAD96476.1"/>
    <property type="molecule type" value="mRNA"/>
</dbReference>
<dbReference type="EMBL" id="EF444986">
    <property type="protein sequence ID" value="ACA06002.1"/>
    <property type="molecule type" value="Genomic_DNA"/>
</dbReference>
<dbReference type="EMBL" id="AP003392">
    <property type="status" value="NOT_ANNOTATED_CDS"/>
    <property type="molecule type" value="Genomic_DNA"/>
</dbReference>
<dbReference type="CCDS" id="CCDS8408.1">
    <molecule id="Q9Y4L1-1"/>
</dbReference>
<dbReference type="PIR" id="JC5278">
    <property type="entry name" value="JC5278"/>
</dbReference>
<dbReference type="RefSeq" id="NP_001124463.1">
    <molecule id="Q9Y4L1-1"/>
    <property type="nucleotide sequence ID" value="NM_001130991.3"/>
</dbReference>
<dbReference type="RefSeq" id="NP_006380.1">
    <molecule id="Q9Y4L1-1"/>
    <property type="nucleotide sequence ID" value="NM_006389.5"/>
</dbReference>
<dbReference type="RefSeq" id="XP_016872585.1">
    <molecule id="Q9Y4L1-1"/>
    <property type="nucleotide sequence ID" value="XM_017017096.2"/>
</dbReference>
<dbReference type="RefSeq" id="XP_016872586.1">
    <molecule id="Q9Y4L1-1"/>
    <property type="nucleotide sequence ID" value="XM_017017097.2"/>
</dbReference>
<dbReference type="RefSeq" id="XP_054187589.1">
    <molecule id="Q9Y4L1-1"/>
    <property type="nucleotide sequence ID" value="XM_054331614.1"/>
</dbReference>
<dbReference type="RefSeq" id="XP_054187590.1">
    <molecule id="Q9Y4L1-1"/>
    <property type="nucleotide sequence ID" value="XM_054331615.1"/>
</dbReference>
<dbReference type="RefSeq" id="XP_054223448.1">
    <molecule id="Q9Y4L1-1"/>
    <property type="nucleotide sequence ID" value="XM_054367473.1"/>
</dbReference>
<dbReference type="RefSeq" id="XP_054223449.1">
    <molecule id="Q9Y4L1-1"/>
    <property type="nucleotide sequence ID" value="XM_054367474.1"/>
</dbReference>
<dbReference type="SMR" id="Q9Y4L1"/>
<dbReference type="BioGRID" id="115780">
    <property type="interactions" value="330"/>
</dbReference>
<dbReference type="FunCoup" id="Q9Y4L1">
    <property type="interactions" value="2529"/>
</dbReference>
<dbReference type="IntAct" id="Q9Y4L1">
    <property type="interactions" value="171"/>
</dbReference>
<dbReference type="MINT" id="Q9Y4L1"/>
<dbReference type="STRING" id="9606.ENSP00000480150"/>
<dbReference type="ChEMBL" id="CHEMBL2216741"/>
<dbReference type="TCDB" id="3.A.16.1.4">
    <property type="family name" value="the endoplasmic reticular retrotranslocon (er-rt) family"/>
</dbReference>
<dbReference type="CarbonylDB" id="Q9Y4L1"/>
<dbReference type="GlyConnect" id="1383">
    <property type="glycosylation" value="47 N-Linked glycans (8 sites)"/>
</dbReference>
<dbReference type="GlyCosmos" id="Q9Y4L1">
    <property type="glycosylation" value="13 sites, 55 glycans"/>
</dbReference>
<dbReference type="GlyGen" id="Q9Y4L1">
    <property type="glycosylation" value="28 sites, 140 N-linked glycans (9 sites), 4 O-linked glycans (17 sites)"/>
</dbReference>
<dbReference type="iPTMnet" id="Q9Y4L1"/>
<dbReference type="MetOSite" id="Q9Y4L1"/>
<dbReference type="PhosphoSitePlus" id="Q9Y4L1"/>
<dbReference type="SwissPalm" id="Q9Y4L1"/>
<dbReference type="BioMuta" id="HYOU1"/>
<dbReference type="DMDM" id="10720185"/>
<dbReference type="REPRODUCTION-2DPAGE" id="IPI00000877"/>
<dbReference type="CPTAC" id="CPTAC-2220"/>
<dbReference type="CPTAC" id="CPTAC-2599"/>
<dbReference type="jPOST" id="Q9Y4L1"/>
<dbReference type="MassIVE" id="Q9Y4L1"/>
<dbReference type="PaxDb" id="9606-ENSP00000480150"/>
<dbReference type="PeptideAtlas" id="Q9Y4L1"/>
<dbReference type="ProteomicsDB" id="6996"/>
<dbReference type="ProteomicsDB" id="86227">
    <molecule id="Q9Y4L1-1"/>
</dbReference>
<dbReference type="Pumba" id="Q9Y4L1"/>
<dbReference type="Antibodypedia" id="32575">
    <property type="antibodies" value="524 antibodies from 38 providers"/>
</dbReference>
<dbReference type="DNASU" id="10525"/>
<dbReference type="Ensembl" id="ENST00000530473.6">
    <molecule id="Q9Y4L1-1"/>
    <property type="protein sequence ID" value="ENSP00000431874.2"/>
    <property type="gene ID" value="ENSG00000149428.21"/>
</dbReference>
<dbReference type="Ensembl" id="ENST00000534233.6">
    <molecule id="Q9Y4L1-1"/>
    <property type="protein sequence ID" value="ENSP00000462951.2"/>
    <property type="gene ID" value="ENSG00000149428.21"/>
</dbReference>
<dbReference type="Ensembl" id="ENST00000614711.5">
    <molecule id="Q9Y4L1-1"/>
    <property type="protein sequence ID" value="ENSP00000480248.2"/>
    <property type="gene ID" value="ENSG00000149428.21"/>
</dbReference>
<dbReference type="Ensembl" id="ENST00000617285.5">
    <molecule id="Q9Y4L1-1"/>
    <property type="protein sequence ID" value="ENSP00000480150.1"/>
    <property type="gene ID" value="ENSG00000149428.21"/>
</dbReference>
<dbReference type="Ensembl" id="ENST00000630669.3">
    <molecule id="Q9Y4L1-1"/>
    <property type="protein sequence ID" value="ENSP00000486825.1"/>
    <property type="gene ID" value="ENSG00000280682.3"/>
</dbReference>
<dbReference type="GeneID" id="10525"/>
<dbReference type="KEGG" id="hsa:10525"/>
<dbReference type="MANE-Select" id="ENST00000617285.5">
    <property type="protein sequence ID" value="ENSP00000480150.1"/>
    <property type="RefSeq nucleotide sequence ID" value="NM_006389.5"/>
    <property type="RefSeq protein sequence ID" value="NP_006380.1"/>
</dbReference>
<dbReference type="UCSC" id="uc031yhc.2">
    <molecule id="Q9Y4L1-1"/>
    <property type="organism name" value="human"/>
</dbReference>
<dbReference type="AGR" id="HGNC:16931"/>
<dbReference type="CTD" id="10525"/>
<dbReference type="DisGeNET" id="10525"/>
<dbReference type="GeneCards" id="HYOU1"/>
<dbReference type="HGNC" id="HGNC:16931">
    <property type="gene designation" value="HYOU1"/>
</dbReference>
<dbReference type="HPA" id="ENSG00000149428">
    <property type="expression patterns" value="Low tissue specificity"/>
</dbReference>
<dbReference type="MalaCards" id="HYOU1"/>
<dbReference type="MIM" id="233600">
    <property type="type" value="phenotype"/>
</dbReference>
<dbReference type="MIM" id="601746">
    <property type="type" value="gene"/>
</dbReference>
<dbReference type="neXtProt" id="NX_Q9Y4L1"/>
<dbReference type="OpenTargets" id="ENSG00000149428"/>
<dbReference type="PharmGKB" id="PA38427"/>
<dbReference type="VEuPathDB" id="HostDB:ENSG00000149428"/>
<dbReference type="eggNOG" id="KOG0104">
    <property type="taxonomic scope" value="Eukaryota"/>
</dbReference>
<dbReference type="GeneTree" id="ENSGT00940000157686"/>
<dbReference type="InParanoid" id="Q9Y4L1"/>
<dbReference type="OMA" id="SRTPMIQ"/>
<dbReference type="OrthoDB" id="10262720at2759"/>
<dbReference type="PAN-GO" id="Q9Y4L1">
    <property type="GO annotations" value="3 GO annotations based on evolutionary models"/>
</dbReference>
<dbReference type="PhylomeDB" id="Q9Y4L1"/>
<dbReference type="TreeFam" id="TF105048"/>
<dbReference type="PathwayCommons" id="Q9Y4L1"/>
<dbReference type="Reactome" id="R-HSA-3000484">
    <property type="pathway name" value="Scavenging by Class F Receptors"/>
</dbReference>
<dbReference type="Reactome" id="R-HSA-381038">
    <property type="pathway name" value="XBP1(S) activates chaperone genes"/>
</dbReference>
<dbReference type="SignaLink" id="Q9Y4L1"/>
<dbReference type="SIGNOR" id="Q9Y4L1"/>
<dbReference type="BioGRID-ORCS" id="10525">
    <property type="hits" value="581 hits in 1182 CRISPR screens"/>
</dbReference>
<dbReference type="CD-CODE" id="91857CE7">
    <property type="entry name" value="Nucleolus"/>
</dbReference>
<dbReference type="ChiTaRS" id="HYOU1">
    <property type="organism name" value="human"/>
</dbReference>
<dbReference type="GeneWiki" id="HYOU1"/>
<dbReference type="GenomeRNAi" id="10525"/>
<dbReference type="Pharos" id="Q9Y4L1">
    <property type="development level" value="Tbio"/>
</dbReference>
<dbReference type="PRO" id="PR:Q9Y4L1"/>
<dbReference type="Proteomes" id="UP000005640">
    <property type="component" value="Chromosome 11"/>
</dbReference>
<dbReference type="RNAct" id="Q9Y4L1">
    <property type="molecule type" value="protein"/>
</dbReference>
<dbReference type="Bgee" id="ENSG00000149428">
    <property type="expression patterns" value="Expressed in islet of Langerhans and 98 other cell types or tissues"/>
</dbReference>
<dbReference type="ExpressionAtlas" id="Q9Y4L1">
    <property type="expression patterns" value="baseline and differential"/>
</dbReference>
<dbReference type="GO" id="GO:0071682">
    <property type="term" value="C:endocytic vesicle lumen"/>
    <property type="evidence" value="ECO:0000304"/>
    <property type="project" value="Reactome"/>
</dbReference>
<dbReference type="GO" id="GO:0005783">
    <property type="term" value="C:endoplasmic reticulum"/>
    <property type="evidence" value="ECO:0000314"/>
    <property type="project" value="FlyBase"/>
</dbReference>
<dbReference type="GO" id="GO:0034663">
    <property type="term" value="C:endoplasmic reticulum chaperone complex"/>
    <property type="evidence" value="ECO:0000318"/>
    <property type="project" value="GO_Central"/>
</dbReference>
<dbReference type="GO" id="GO:0005788">
    <property type="term" value="C:endoplasmic reticulum lumen"/>
    <property type="evidence" value="ECO:0000304"/>
    <property type="project" value="Reactome"/>
</dbReference>
<dbReference type="GO" id="GO:0070062">
    <property type="term" value="C:extracellular exosome"/>
    <property type="evidence" value="ECO:0007005"/>
    <property type="project" value="UniProtKB"/>
</dbReference>
<dbReference type="GO" id="GO:0005576">
    <property type="term" value="C:extracellular region"/>
    <property type="evidence" value="ECO:0000304"/>
    <property type="project" value="Reactome"/>
</dbReference>
<dbReference type="GO" id="GO:0005925">
    <property type="term" value="C:focal adhesion"/>
    <property type="evidence" value="ECO:0007005"/>
    <property type="project" value="UniProtKB"/>
</dbReference>
<dbReference type="GO" id="GO:0016020">
    <property type="term" value="C:membrane"/>
    <property type="evidence" value="ECO:0007005"/>
    <property type="project" value="UniProtKB"/>
</dbReference>
<dbReference type="GO" id="GO:0005739">
    <property type="term" value="C:mitochondrion"/>
    <property type="evidence" value="ECO:0000314"/>
    <property type="project" value="FlyBase"/>
</dbReference>
<dbReference type="GO" id="GO:0005790">
    <property type="term" value="C:smooth endoplasmic reticulum"/>
    <property type="evidence" value="ECO:0000250"/>
    <property type="project" value="ParkinsonsUK-UCL"/>
</dbReference>
<dbReference type="GO" id="GO:0000774">
    <property type="term" value="F:adenyl-nucleotide exchange factor activity"/>
    <property type="evidence" value="ECO:0000318"/>
    <property type="project" value="GO_Central"/>
</dbReference>
<dbReference type="GO" id="GO:0005524">
    <property type="term" value="F:ATP binding"/>
    <property type="evidence" value="ECO:0007669"/>
    <property type="project" value="UniProtKB-KW"/>
</dbReference>
<dbReference type="GO" id="GO:0140662">
    <property type="term" value="F:ATP-dependent protein folding chaperone"/>
    <property type="evidence" value="ECO:0007669"/>
    <property type="project" value="InterPro"/>
</dbReference>
<dbReference type="GO" id="GO:0051087">
    <property type="term" value="F:protein-folding chaperone binding"/>
    <property type="evidence" value="ECO:0000250"/>
    <property type="project" value="ParkinsonsUK-UCL"/>
</dbReference>
<dbReference type="GO" id="GO:0051082">
    <property type="term" value="F:unfolded protein binding"/>
    <property type="evidence" value="ECO:0000250"/>
    <property type="project" value="FlyBase"/>
</dbReference>
<dbReference type="GO" id="GO:0071456">
    <property type="term" value="P:cellular response to hypoxia"/>
    <property type="evidence" value="ECO:0000314"/>
    <property type="project" value="ParkinsonsUK-UCL"/>
</dbReference>
<dbReference type="GO" id="GO:0006888">
    <property type="term" value="P:endoplasmic reticulum to Golgi vesicle-mediated transport"/>
    <property type="evidence" value="ECO:0000314"/>
    <property type="project" value="ParkinsonsUK-UCL"/>
</dbReference>
<dbReference type="GO" id="GO:1903382">
    <property type="term" value="P:negative regulation of endoplasmic reticulum stress-induced neuron intrinsic apoptotic signaling pathway"/>
    <property type="evidence" value="ECO:0007669"/>
    <property type="project" value="Ensembl"/>
</dbReference>
<dbReference type="GO" id="GO:1903298">
    <property type="term" value="P:negative regulation of hypoxia-induced intrinsic apoptotic signaling pathway"/>
    <property type="evidence" value="ECO:0000314"/>
    <property type="project" value="ParkinsonsUK-UCL"/>
</dbReference>
<dbReference type="GO" id="GO:0034976">
    <property type="term" value="P:response to endoplasmic reticulum stress"/>
    <property type="evidence" value="ECO:0000270"/>
    <property type="project" value="ParkinsonsUK-UCL"/>
</dbReference>
<dbReference type="GO" id="GO:0002931">
    <property type="term" value="P:response to ischemia"/>
    <property type="evidence" value="ECO:0000250"/>
    <property type="project" value="ParkinsonsUK-UCL"/>
</dbReference>
<dbReference type="CDD" id="cd10230">
    <property type="entry name" value="ASKHA_NBD_HSP70_HYOU1"/>
    <property type="match status" value="1"/>
</dbReference>
<dbReference type="FunFam" id="1.20.1270.10:FF:000013">
    <property type="entry name" value="Hypoxia up-regulated protein 1"/>
    <property type="match status" value="1"/>
</dbReference>
<dbReference type="FunFam" id="2.60.34.10:FF:000009">
    <property type="entry name" value="Hypoxia up-regulated protein 1"/>
    <property type="match status" value="1"/>
</dbReference>
<dbReference type="FunFam" id="3.90.640.10:FF:000012">
    <property type="entry name" value="Hypoxia up-regulated protein 1"/>
    <property type="match status" value="1"/>
</dbReference>
<dbReference type="FunFam" id="3.30.30.30:FF:000004">
    <property type="entry name" value="hypoxia up-regulated protein 1"/>
    <property type="match status" value="1"/>
</dbReference>
<dbReference type="Gene3D" id="1.20.1270.10">
    <property type="match status" value="1"/>
</dbReference>
<dbReference type="Gene3D" id="3.30.30.30">
    <property type="match status" value="1"/>
</dbReference>
<dbReference type="Gene3D" id="3.30.420.40">
    <property type="match status" value="2"/>
</dbReference>
<dbReference type="Gene3D" id="3.90.640.10">
    <property type="entry name" value="Actin, Chain A, domain 4"/>
    <property type="match status" value="1"/>
</dbReference>
<dbReference type="Gene3D" id="2.60.34.10">
    <property type="entry name" value="Substrate Binding Domain Of DNAk, Chain A, domain 1"/>
    <property type="match status" value="1"/>
</dbReference>
<dbReference type="InterPro" id="IPR043129">
    <property type="entry name" value="ATPase_NBD"/>
</dbReference>
<dbReference type="InterPro" id="IPR018181">
    <property type="entry name" value="Heat_shock_70_CS"/>
</dbReference>
<dbReference type="InterPro" id="IPR029048">
    <property type="entry name" value="HSP70_C_sf"/>
</dbReference>
<dbReference type="InterPro" id="IPR029047">
    <property type="entry name" value="HSP70_peptide-bd_sf"/>
</dbReference>
<dbReference type="InterPro" id="IPR013126">
    <property type="entry name" value="Hsp_70_fam"/>
</dbReference>
<dbReference type="PANTHER" id="PTHR45639">
    <property type="entry name" value="HSC70CB, ISOFORM G-RELATED"/>
    <property type="match status" value="1"/>
</dbReference>
<dbReference type="PANTHER" id="PTHR45639:SF3">
    <property type="entry name" value="HYPOXIA UP-REGULATED PROTEIN 1"/>
    <property type="match status" value="1"/>
</dbReference>
<dbReference type="Pfam" id="PF00012">
    <property type="entry name" value="HSP70"/>
    <property type="match status" value="1"/>
</dbReference>
<dbReference type="PRINTS" id="PR00301">
    <property type="entry name" value="HEATSHOCK70"/>
</dbReference>
<dbReference type="SUPFAM" id="SSF53067">
    <property type="entry name" value="Actin-like ATPase domain"/>
    <property type="match status" value="2"/>
</dbReference>
<dbReference type="SUPFAM" id="SSF100934">
    <property type="entry name" value="Heat shock protein 70kD (HSP70), C-terminal subdomain"/>
    <property type="match status" value="1"/>
</dbReference>
<dbReference type="PROSITE" id="PS00329">
    <property type="entry name" value="HSP70_2"/>
    <property type="match status" value="1"/>
</dbReference>
<dbReference type="PROSITE" id="PS01036">
    <property type="entry name" value="HSP70_3"/>
    <property type="match status" value="1"/>
</dbReference>
<proteinExistence type="evidence at protein level"/>
<accession>Q9Y4L1</accession>
<accession>A8C1Z0</accession>
<accession>B7Z909</accession>
<accession>Q2I204</accession>
<accession>Q53H25</accession>
<protein>
    <recommendedName>
        <fullName>Hypoxia up-regulated protein 1</fullName>
    </recommendedName>
    <alternativeName>
        <fullName>150 kDa oxygen-regulated protein</fullName>
        <shortName>ORP-150</shortName>
    </alternativeName>
    <alternativeName>
        <fullName>170 kDa glucose-regulated protein</fullName>
        <shortName>GRP-170</shortName>
    </alternativeName>
    <alternativeName>
        <fullName evidence="12">Heat shock protein family H member 4</fullName>
    </alternativeName>
</protein>
<reference key="1">
    <citation type="journal article" date="1997" name="Biochem. Biophys. Res. Commun.">
        <title>Cloning and expression of cDNA encoding the human 150 kDa oxygen-regulated protein, ORP150.</title>
        <authorList>
            <person name="Ikeda J."/>
            <person name="Kaneda S."/>
            <person name="Kuwabara K."/>
            <person name="Ogawa S."/>
            <person name="Kobayashi T."/>
            <person name="Matsumoto M."/>
            <person name="Yura T."/>
            <person name="Yanagi H."/>
        </authorList>
    </citation>
    <scope>NUCLEOTIDE SEQUENCE [MRNA] (ISOFORM 1)</scope>
    <source>
        <tissue>Astrocytoma</tissue>
    </source>
</reference>
<reference key="2">
    <citation type="journal article" date="2000" name="J. Biochem.">
        <title>Production of three distinct mRNAs of 150 kDa oxygen-regulated protein (ORP150) by alternative promoters: preferential induction of one species under stress conditions.</title>
        <authorList>
            <person name="Kaneda S."/>
            <person name="Yura T."/>
            <person name="Yanagi H."/>
        </authorList>
    </citation>
    <scope>NUCLEOTIDE SEQUENCE [GENOMIC DNA]</scope>
</reference>
<reference key="3">
    <citation type="journal article" date="2006" name="Protein J.">
        <title>Molecular cloning, sequence, function and structural basis of human heart 150 kDa oxygen-regulated protein, an ER chaperone.</title>
        <authorList>
            <person name="Takeuchi S."/>
        </authorList>
    </citation>
    <scope>NUCLEOTIDE SEQUENCE [MRNA] (ISOFORM 1)</scope>
    <source>
        <tissue>Heart</tissue>
    </source>
</reference>
<reference key="4">
    <citation type="journal article" date="2004" name="Nat. Genet.">
        <title>Complete sequencing and characterization of 21,243 full-length human cDNAs.</title>
        <authorList>
            <person name="Ota T."/>
            <person name="Suzuki Y."/>
            <person name="Nishikawa T."/>
            <person name="Otsuki T."/>
            <person name="Sugiyama T."/>
            <person name="Irie R."/>
            <person name="Wakamatsu A."/>
            <person name="Hayashi K."/>
            <person name="Sato H."/>
            <person name="Nagai K."/>
            <person name="Kimura K."/>
            <person name="Makita H."/>
            <person name="Sekine M."/>
            <person name="Obayashi M."/>
            <person name="Nishi T."/>
            <person name="Shibahara T."/>
            <person name="Tanaka T."/>
            <person name="Ishii S."/>
            <person name="Yamamoto J."/>
            <person name="Saito K."/>
            <person name="Kawai Y."/>
            <person name="Isono Y."/>
            <person name="Nakamura Y."/>
            <person name="Nagahari K."/>
            <person name="Murakami K."/>
            <person name="Yasuda T."/>
            <person name="Iwayanagi T."/>
            <person name="Wagatsuma M."/>
            <person name="Shiratori A."/>
            <person name="Sudo H."/>
            <person name="Hosoiri T."/>
            <person name="Kaku Y."/>
            <person name="Kodaira H."/>
            <person name="Kondo H."/>
            <person name="Sugawara M."/>
            <person name="Takahashi M."/>
            <person name="Kanda K."/>
            <person name="Yokoi T."/>
            <person name="Furuya T."/>
            <person name="Kikkawa E."/>
            <person name="Omura Y."/>
            <person name="Abe K."/>
            <person name="Kamihara K."/>
            <person name="Katsuta N."/>
            <person name="Sato K."/>
            <person name="Tanikawa M."/>
            <person name="Yamazaki M."/>
            <person name="Ninomiya K."/>
            <person name="Ishibashi T."/>
            <person name="Yamashita H."/>
            <person name="Murakawa K."/>
            <person name="Fujimori K."/>
            <person name="Tanai H."/>
            <person name="Kimata M."/>
            <person name="Watanabe M."/>
            <person name="Hiraoka S."/>
            <person name="Chiba Y."/>
            <person name="Ishida S."/>
            <person name="Ono Y."/>
            <person name="Takiguchi S."/>
            <person name="Watanabe S."/>
            <person name="Yosida M."/>
            <person name="Hotuta T."/>
            <person name="Kusano J."/>
            <person name="Kanehori K."/>
            <person name="Takahashi-Fujii A."/>
            <person name="Hara H."/>
            <person name="Tanase T.-O."/>
            <person name="Nomura Y."/>
            <person name="Togiya S."/>
            <person name="Komai F."/>
            <person name="Hara R."/>
            <person name="Takeuchi K."/>
            <person name="Arita M."/>
            <person name="Imose N."/>
            <person name="Musashino K."/>
            <person name="Yuuki H."/>
            <person name="Oshima A."/>
            <person name="Sasaki N."/>
            <person name="Aotsuka S."/>
            <person name="Yoshikawa Y."/>
            <person name="Matsunawa H."/>
            <person name="Ichihara T."/>
            <person name="Shiohata N."/>
            <person name="Sano S."/>
            <person name="Moriya S."/>
            <person name="Momiyama H."/>
            <person name="Satoh N."/>
            <person name="Takami S."/>
            <person name="Terashima Y."/>
            <person name="Suzuki O."/>
            <person name="Nakagawa S."/>
            <person name="Senoh A."/>
            <person name="Mizoguchi H."/>
            <person name="Goto Y."/>
            <person name="Shimizu F."/>
            <person name="Wakebe H."/>
            <person name="Hishigaki H."/>
            <person name="Watanabe T."/>
            <person name="Sugiyama A."/>
            <person name="Takemoto M."/>
            <person name="Kawakami B."/>
            <person name="Yamazaki M."/>
            <person name="Watanabe K."/>
            <person name="Kumagai A."/>
            <person name="Itakura S."/>
            <person name="Fukuzumi Y."/>
            <person name="Fujimori Y."/>
            <person name="Komiyama M."/>
            <person name="Tashiro H."/>
            <person name="Tanigami A."/>
            <person name="Fujiwara T."/>
            <person name="Ono T."/>
            <person name="Yamada K."/>
            <person name="Fujii Y."/>
            <person name="Ozaki K."/>
            <person name="Hirao M."/>
            <person name="Ohmori Y."/>
            <person name="Kawabata A."/>
            <person name="Hikiji T."/>
            <person name="Kobatake N."/>
            <person name="Inagaki H."/>
            <person name="Ikema Y."/>
            <person name="Okamoto S."/>
            <person name="Okitani R."/>
            <person name="Kawakami T."/>
            <person name="Noguchi S."/>
            <person name="Itoh T."/>
            <person name="Shigeta K."/>
            <person name="Senba T."/>
            <person name="Matsumura K."/>
            <person name="Nakajima Y."/>
            <person name="Mizuno T."/>
            <person name="Morinaga M."/>
            <person name="Sasaki M."/>
            <person name="Togashi T."/>
            <person name="Oyama M."/>
            <person name="Hata H."/>
            <person name="Watanabe M."/>
            <person name="Komatsu T."/>
            <person name="Mizushima-Sugano J."/>
            <person name="Satoh T."/>
            <person name="Shirai Y."/>
            <person name="Takahashi Y."/>
            <person name="Nakagawa K."/>
            <person name="Okumura K."/>
            <person name="Nagase T."/>
            <person name="Nomura N."/>
            <person name="Kikuchi H."/>
            <person name="Masuho Y."/>
            <person name="Yamashita R."/>
            <person name="Nakai K."/>
            <person name="Yada T."/>
            <person name="Nakamura Y."/>
            <person name="Ohara O."/>
            <person name="Isogai T."/>
            <person name="Sugano S."/>
        </authorList>
    </citation>
    <scope>NUCLEOTIDE SEQUENCE [LARGE SCALE MRNA] (ISOFORMS 1 AND 2)</scope>
    <source>
        <tissue>Cerebellum</tissue>
        <tissue>Trachea</tissue>
    </source>
</reference>
<reference key="5">
    <citation type="submission" date="2005-04" db="EMBL/GenBank/DDBJ databases">
        <authorList>
            <person name="Suzuki Y."/>
            <person name="Sugano S."/>
            <person name="Totoki Y."/>
            <person name="Toyoda A."/>
            <person name="Takeda T."/>
            <person name="Sakaki Y."/>
            <person name="Tanaka A."/>
            <person name="Yokoyama S."/>
        </authorList>
    </citation>
    <scope>NUCLEOTIDE SEQUENCE [LARGE SCALE MRNA] (ISOFORM 1)</scope>
    <source>
        <tissue>Liver</tissue>
    </source>
</reference>
<reference key="6">
    <citation type="submission" date="2007-02" db="EMBL/GenBank/DDBJ databases">
        <authorList>
            <consortium name="NHLBI resequencing and genotyping service (RS&amp;G)"/>
        </authorList>
    </citation>
    <scope>NUCLEOTIDE SEQUENCE [GENOMIC DNA]</scope>
</reference>
<reference key="7">
    <citation type="journal article" date="2006" name="Nature">
        <title>Human chromosome 11 DNA sequence and analysis including novel gene identification.</title>
        <authorList>
            <person name="Taylor T.D."/>
            <person name="Noguchi H."/>
            <person name="Totoki Y."/>
            <person name="Toyoda A."/>
            <person name="Kuroki Y."/>
            <person name="Dewar K."/>
            <person name="Lloyd C."/>
            <person name="Itoh T."/>
            <person name="Takeda T."/>
            <person name="Kim D.-W."/>
            <person name="She X."/>
            <person name="Barlow K.F."/>
            <person name="Bloom T."/>
            <person name="Bruford E."/>
            <person name="Chang J.L."/>
            <person name="Cuomo C.A."/>
            <person name="Eichler E."/>
            <person name="FitzGerald M.G."/>
            <person name="Jaffe D.B."/>
            <person name="LaButti K."/>
            <person name="Nicol R."/>
            <person name="Park H.-S."/>
            <person name="Seaman C."/>
            <person name="Sougnez C."/>
            <person name="Yang X."/>
            <person name="Zimmer A.R."/>
            <person name="Zody M.C."/>
            <person name="Birren B.W."/>
            <person name="Nusbaum C."/>
            <person name="Fujiyama A."/>
            <person name="Hattori M."/>
            <person name="Rogers J."/>
            <person name="Lander E.S."/>
            <person name="Sakaki Y."/>
        </authorList>
    </citation>
    <scope>NUCLEOTIDE SEQUENCE [LARGE SCALE GENOMIC DNA]</scope>
</reference>
<reference key="8">
    <citation type="submission" date="2008-12" db="UniProtKB">
        <authorList>
            <person name="Lubec G."/>
            <person name="Chen W.-Q."/>
            <person name="Sun Y."/>
        </authorList>
    </citation>
    <scope>PROTEIN SEQUENCE OF 241-256; 541-555; 577-594 AND 754-768</scope>
    <scope>IDENTIFICATION BY MASS SPECTROMETRY</scope>
    <source>
        <tissue>Fetal brain cortex</tissue>
    </source>
</reference>
<reference key="9">
    <citation type="journal article" date="1999" name="J. Biol. Chem.">
        <title>150-kDa oxygen-regulated protein (ORP150) suppresses hypoxia-induced apoptotic cell death.</title>
        <authorList>
            <person name="Ozawa K."/>
            <person name="Kuwabara K."/>
            <person name="Tamatani M."/>
            <person name="Takatsuji K."/>
            <person name="Tsukamoto Y."/>
            <person name="Kaneda S."/>
            <person name="Yanagi H."/>
            <person name="Stern D.M."/>
            <person name="Eguchi Y."/>
            <person name="Tsujimoto Y."/>
            <person name="Ogawa S."/>
            <person name="Tohyama M."/>
        </authorList>
    </citation>
    <scope>FUNCTION</scope>
</reference>
<reference key="10">
    <citation type="journal article" date="2002" name="Mol. Biol. Cell">
        <title>A subset of chaperones and folding enzymes form multiprotein complexes in endoplasmic reticulum to bind nascent proteins.</title>
        <authorList>
            <person name="Meunier L."/>
            <person name="Usherwood Y.-K."/>
            <person name="Chung K.T."/>
            <person name="Hendershot L.M."/>
        </authorList>
    </citation>
    <scope>COMPONENT OF A CHAPERONE COMPLEX</scope>
</reference>
<reference key="11">
    <citation type="journal article" date="2003" name="Nat. Biotechnol.">
        <title>Identification and quantification of N-linked glycoproteins using hydrazide chemistry, stable isotope labeling and mass spectrometry.</title>
        <authorList>
            <person name="Zhang H."/>
            <person name="Li X.-J."/>
            <person name="Martin D.B."/>
            <person name="Aebersold R."/>
        </authorList>
    </citation>
    <scope>GLYCOSYLATION AT ASN-155; ASN-515; ASN-596; ASN-830; ASN-862 AND ASN-931</scope>
</reference>
<reference key="12">
    <citation type="journal article" date="2005" name="J. Proteome Res.">
        <title>Human plasma N-glycoproteome analysis by immunoaffinity subtraction, hydrazide chemistry, and mass spectrometry.</title>
        <authorList>
            <person name="Liu T."/>
            <person name="Qian W.-J."/>
            <person name="Gritsenko M.A."/>
            <person name="Camp D.G. II"/>
            <person name="Monroe M.E."/>
            <person name="Moore R.J."/>
            <person name="Smith R.D."/>
        </authorList>
    </citation>
    <scope>GLYCOSYLATION [LARGE SCALE ANALYSIS] AT ASN-515; ASN-830; ASN-869 AND ASN-931</scope>
    <source>
        <tissue>Plasma</tissue>
    </source>
</reference>
<reference key="13">
    <citation type="journal article" date="2006" name="Mol. Cell. Proteomics">
        <title>Elucidation of N-glycosylation sites on human platelet proteins: a glycoproteomic approach.</title>
        <authorList>
            <person name="Lewandrowski U."/>
            <person name="Moebius J."/>
            <person name="Walter U."/>
            <person name="Sickmann A."/>
        </authorList>
    </citation>
    <scope>GLYCOSYLATION [LARGE SCALE ANALYSIS] AT ASN-515</scope>
    <source>
        <tissue>Platelet</tissue>
    </source>
</reference>
<reference key="14">
    <citation type="journal article" date="2009" name="Cell Stress Chaperones">
        <title>Guidelines for the nomenclature of the human heat shock proteins.</title>
        <authorList>
            <person name="Kampinga H.H."/>
            <person name="Hageman J."/>
            <person name="Vos M.J."/>
            <person name="Kubota H."/>
            <person name="Tanguay R.M."/>
            <person name="Bruford E.A."/>
            <person name="Cheetham M.E."/>
            <person name="Chen B."/>
            <person name="Hightower L.E."/>
        </authorList>
    </citation>
    <scope>NOMENCLATURE</scope>
</reference>
<reference key="15">
    <citation type="journal article" date="2009" name="J. Proteome Res.">
        <title>Glycoproteomics analysis of human liver tissue by combination of multiple enzyme digestion and hydrazide chemistry.</title>
        <authorList>
            <person name="Chen R."/>
            <person name="Jiang X."/>
            <person name="Sun D."/>
            <person name="Han G."/>
            <person name="Wang F."/>
            <person name="Ye M."/>
            <person name="Wang L."/>
            <person name="Zou H."/>
        </authorList>
    </citation>
    <scope>GLYCOSYLATION [LARGE SCALE ANALYSIS] AT ASN-515; ASN-596; ASN-830; ASN-862 AND ASN-931</scope>
    <source>
        <tissue>Liver</tissue>
    </source>
</reference>
<reference key="16">
    <citation type="journal article" date="2009" name="Nat. Biotechnol.">
        <title>Mass-spectrometric identification and relative quantification of N-linked cell surface glycoproteins.</title>
        <authorList>
            <person name="Wollscheid B."/>
            <person name="Bausch-Fluck D."/>
            <person name="Henderson C."/>
            <person name="O'Brien R."/>
            <person name="Bibel M."/>
            <person name="Schiess R."/>
            <person name="Aebersold R."/>
            <person name="Watts J.D."/>
        </authorList>
    </citation>
    <scope>GLYCOSYLATION [LARGE SCALE ANALYSIS] AT ASN-515</scope>
    <source>
        <tissue>Leukemic T-cell</tissue>
    </source>
</reference>
<reference key="17">
    <citation type="journal article" date="2011" name="BMC Syst. Biol.">
        <title>Initial characterization of the human central proteome.</title>
        <authorList>
            <person name="Burkard T.R."/>
            <person name="Planyavsky M."/>
            <person name="Kaupe I."/>
            <person name="Breitwieser F.P."/>
            <person name="Buerckstuemmer T."/>
            <person name="Bennett K.L."/>
            <person name="Superti-Furga G."/>
            <person name="Colinge J."/>
        </authorList>
    </citation>
    <scope>IDENTIFICATION BY MASS SPECTROMETRY [LARGE SCALE ANALYSIS]</scope>
</reference>
<reference key="18">
    <citation type="journal article" date="2014" name="J. Proteomics">
        <title>An enzyme assisted RP-RPLC approach for in-depth analysis of human liver phosphoproteome.</title>
        <authorList>
            <person name="Bian Y."/>
            <person name="Song C."/>
            <person name="Cheng K."/>
            <person name="Dong M."/>
            <person name="Wang F."/>
            <person name="Huang J."/>
            <person name="Sun D."/>
            <person name="Wang L."/>
            <person name="Ye M."/>
            <person name="Zou H."/>
        </authorList>
    </citation>
    <scope>PHOSPHORYLATION [LARGE SCALE ANALYSIS] AT SER-567</scope>
    <scope>IDENTIFICATION BY MASS SPECTROMETRY [LARGE SCALE ANALYSIS]</scope>
    <source>
        <tissue>Liver</tissue>
    </source>
</reference>
<reference key="19">
    <citation type="journal article" date="2015" name="Proteomics">
        <title>N-terminome analysis of the human mitochondrial proteome.</title>
        <authorList>
            <person name="Vaca Jacome A.S."/>
            <person name="Rabilloud T."/>
            <person name="Schaeffer-Reiss C."/>
            <person name="Rompais M."/>
            <person name="Ayoub D."/>
            <person name="Lane L."/>
            <person name="Bairoch A."/>
            <person name="Van Dorsselaer A."/>
            <person name="Carapito C."/>
        </authorList>
    </citation>
    <scope>CLEAVAGE OF SIGNAL PEPTIDE [LARGE SCALE ANALYSIS] AFTER THR-32</scope>
    <scope>IDENTIFICATION BY MASS SPECTROMETRY [LARGE SCALE ANALYSIS]</scope>
</reference>
<reference key="20">
    <citation type="journal article" date="2017" name="J. Allergy Clin. Immunol.">
        <title>Combined immunodeficiency and hypoglycemia associated with mutations in hypoxia upregulated 1.</title>
        <authorList>
            <person name="Haapaniemi E.M."/>
            <person name="Fogarty C.L."/>
            <person name="Keskitalo S."/>
            <person name="Katayama S."/>
            <person name="Vihinen H."/>
            <person name="Ilander M."/>
            <person name="Mustjoki S."/>
            <person name="Krjutskov K."/>
            <person name="Lehto M."/>
            <person name="Hautala T."/>
            <person name="Eriksson O."/>
            <person name="Jokitalo E."/>
            <person name="Velagapudi V."/>
            <person name="Varjosalo M."/>
            <person name="Seppaenen M."/>
            <person name="Kere J."/>
        </authorList>
    </citation>
    <scope>INVOLVEMENT IN IMD59</scope>
    <scope>VARIANTS IMD59 HIS-231 AND PRO-419</scope>
</reference>
<keyword id="KW-0007">Acetylation</keyword>
<keyword id="KW-0025">Alternative splicing</keyword>
<keyword id="KW-0067">ATP-binding</keyword>
<keyword id="KW-0143">Chaperone</keyword>
<keyword id="KW-0903">Direct protein sequencing</keyword>
<keyword id="KW-0225">Disease variant</keyword>
<keyword id="KW-0256">Endoplasmic reticulum</keyword>
<keyword id="KW-0325">Glycoprotein</keyword>
<keyword id="KW-0547">Nucleotide-binding</keyword>
<keyword id="KW-0597">Phosphoprotein</keyword>
<keyword id="KW-1267">Proteomics identification</keyword>
<keyword id="KW-1185">Reference proteome</keyword>
<keyword id="KW-0732">Signal</keyword>
<keyword id="KW-0346">Stress response</keyword>
<sequence length="999" mass="111335">MADKVRRQRPRRRVCWALVAVLLADLLALSDTLAVMSVDLGSESMKVAIVKPGVPMEIVLNKESRRKTPVIVTLKENERFFGDSAASMAIKNPKATLRYFQHLLGKQADNPHVALYQARFPEHELTFDPQRQTVHFQISSQLQFSPEEVLGMVLNYSRSLAEDFAEQPIKDAVITVPVFFNQAERRAVLQAARMAGLKVLQLINDNTATALSYGVFRRKDINTTAQNIMFYDMGSGSTVCTIVTYQMVKTKEAGMQPQLQIRGVGFDRTLGGLEMELRLRERLAGLFNEQRKGQRAKDVRENPRAMAKLLREANRLKTVLSANADHMAQIEGLMDDVDFKAKVTRVEFEELCADLFERVPGPVQQALQSAEMSLDEIEQVILVGGATRVPRVQEVLLKAVGKEELGKNINADEAAAMGAVYQAAALSKAFKVKPFVVRDAVVYPILVEFTREVEEEPGIHSLKHNKRVLFSRMGPYPQRKVITFNRYSHDFNFHINYGDLGFLGPEDLRVFGSQNLTTVKLKGVGDSFKKYPDYESKGIKAHFNLDESGVLSLDRVESVFETLVEDSAEEESTLTKLGNTISSLFGGGTTPDAKENGTDTVQEEEESPAEGSKDEPGEQVELKEEAEAPVEDGSQPPPPEPKGDATPEGEKATEKENGDKSEAQKPSEKAEAGPEGVAPAPEGEKKQKPARKRRMVEEIGVELVVLDLPDLPEDKLAQSVQKLQDLTLRDLEKQEREKAANSLEAFIFETQDKLYQPEYQEVSTEEQREEISGKLSAASTWLEDEGVGATTVMLKEKLAELRKLCQGLFFRVEERKKWPERLSALDNLLNHSSMFLKGARLIPEMDQIFTEVEMTTLEKVINETWAWKNATLAEQAKLPATEKPVLLSKDIEAKMMALDREVQYLLNKAKFTKPRPRPKDKNGTRAEPPLNASASDQGEKVIPPAGQTEDAEPISEPEKVETGSEPGDTEPLELGGPGAEPEQKEQSTGQKRPLKNDEL</sequence>
<name>HYOU1_HUMAN</name>
<gene>
    <name type="primary">HYOU1</name>
    <name type="synonym">GRP170</name>
    <name evidence="12" type="synonym">HSPH4</name>
    <name type="synonym">ORP150</name>
</gene>
<organism>
    <name type="scientific">Homo sapiens</name>
    <name type="common">Human</name>
    <dbReference type="NCBI Taxonomy" id="9606"/>
    <lineage>
        <taxon>Eukaryota</taxon>
        <taxon>Metazoa</taxon>
        <taxon>Chordata</taxon>
        <taxon>Craniata</taxon>
        <taxon>Vertebrata</taxon>
        <taxon>Euteleostomi</taxon>
        <taxon>Mammalia</taxon>
        <taxon>Eutheria</taxon>
        <taxon>Euarchontoglires</taxon>
        <taxon>Primates</taxon>
        <taxon>Haplorrhini</taxon>
        <taxon>Catarrhini</taxon>
        <taxon>Hominidae</taxon>
        <taxon>Homo</taxon>
    </lineage>
</organism>
<evidence type="ECO:0000250" key="1">
    <source>
        <dbReference type="UniProtKB" id="Q9JKR6"/>
    </source>
</evidence>
<evidence type="ECO:0000255" key="2"/>
<evidence type="ECO:0000256" key="3">
    <source>
        <dbReference type="SAM" id="MobiDB-lite"/>
    </source>
</evidence>
<evidence type="ECO:0000269" key="4">
    <source>
    </source>
</evidence>
<evidence type="ECO:0000269" key="5">
    <source>
    </source>
</evidence>
<evidence type="ECO:0000269" key="6">
    <source>
    </source>
</evidence>
<evidence type="ECO:0000269" key="7">
    <source>
    </source>
</evidence>
<evidence type="ECO:0000269" key="8">
    <source>
    </source>
</evidence>
<evidence type="ECO:0000269" key="9">
    <source>
    </source>
</evidence>
<evidence type="ECO:0000269" key="10">
    <source>
    </source>
</evidence>
<evidence type="ECO:0000303" key="11">
    <source>
    </source>
</evidence>
<evidence type="ECO:0000303" key="12">
    <source>
    </source>
</evidence>
<evidence type="ECO:0000305" key="13"/>
<evidence type="ECO:0007744" key="14">
    <source>
    </source>
</evidence>
<evidence type="ECO:0007744" key="15">
    <source>
    </source>
</evidence>